<evidence type="ECO:0000255" key="1">
    <source>
        <dbReference type="HAMAP-Rule" id="MF_00075"/>
    </source>
</evidence>
<evidence type="ECO:0000256" key="2">
    <source>
        <dbReference type="SAM" id="MobiDB-lite"/>
    </source>
</evidence>
<feature type="chain" id="PRO_0000095784" description="Translation initiation factor IF-1 2">
    <location>
        <begin position="1"/>
        <end position="87"/>
    </location>
</feature>
<feature type="domain" description="S1-like" evidence="1">
    <location>
        <begin position="1"/>
        <end position="72"/>
    </location>
</feature>
<feature type="region of interest" description="Disordered" evidence="2">
    <location>
        <begin position="65"/>
        <end position="87"/>
    </location>
</feature>
<reference key="1">
    <citation type="journal article" date="2004" name="Nat. Biotechnol.">
        <title>The genome sequence of the anaerobic, sulfate-reducing bacterium Desulfovibrio vulgaris Hildenborough.</title>
        <authorList>
            <person name="Heidelberg J.F."/>
            <person name="Seshadri R."/>
            <person name="Haveman S.A."/>
            <person name="Hemme C.L."/>
            <person name="Paulsen I.T."/>
            <person name="Kolonay J.F."/>
            <person name="Eisen J.A."/>
            <person name="Ward N.L."/>
            <person name="Methe B.A."/>
            <person name="Brinkac L.M."/>
            <person name="Daugherty S.C."/>
            <person name="DeBoy R.T."/>
            <person name="Dodson R.J."/>
            <person name="Durkin A.S."/>
            <person name="Madupu R."/>
            <person name="Nelson W.C."/>
            <person name="Sullivan S.A."/>
            <person name="Fouts D.E."/>
            <person name="Haft D.H."/>
            <person name="Selengut J."/>
            <person name="Peterson J.D."/>
            <person name="Davidsen T.M."/>
            <person name="Zafar N."/>
            <person name="Zhou L."/>
            <person name="Radune D."/>
            <person name="Dimitrov G."/>
            <person name="Hance M."/>
            <person name="Tran K."/>
            <person name="Khouri H.M."/>
            <person name="Gill J."/>
            <person name="Utterback T.R."/>
            <person name="Feldblyum T.V."/>
            <person name="Wall J.D."/>
            <person name="Voordouw G."/>
            <person name="Fraser C.M."/>
        </authorList>
    </citation>
    <scope>NUCLEOTIDE SEQUENCE [LARGE SCALE GENOMIC DNA]</scope>
    <source>
        <strain>ATCC 29579 / DSM 644 / CCUG 34227 / NCIMB 8303 / VKM B-1760 / Hildenborough</strain>
    </source>
</reference>
<gene>
    <name evidence="1" type="primary">infA2</name>
    <name type="synonym">infA-2</name>
    <name type="ordered locus">DVU_2216</name>
</gene>
<proteinExistence type="inferred from homology"/>
<sequence>MAADDHIEMEGVVEEALPGTLFRVVLENGHEVLAHLCGKMRKFRIRVLPGDKVTVHISPYDLTKGRIARRTTTPSGGPRPARSGNRR</sequence>
<accession>P61687</accession>
<keyword id="KW-0963">Cytoplasm</keyword>
<keyword id="KW-0396">Initiation factor</keyword>
<keyword id="KW-0648">Protein biosynthesis</keyword>
<keyword id="KW-1185">Reference proteome</keyword>
<keyword id="KW-0694">RNA-binding</keyword>
<keyword id="KW-0699">rRNA-binding</keyword>
<dbReference type="EMBL" id="AE017285">
    <property type="protein sequence ID" value="AAS96689.1"/>
    <property type="molecule type" value="Genomic_DNA"/>
</dbReference>
<dbReference type="RefSeq" id="WP_010939491.1">
    <property type="nucleotide sequence ID" value="NC_002937.3"/>
</dbReference>
<dbReference type="RefSeq" id="YP_011429.1">
    <property type="nucleotide sequence ID" value="NC_002937.3"/>
</dbReference>
<dbReference type="SMR" id="P61687"/>
<dbReference type="IntAct" id="P61687">
    <property type="interactions" value="1"/>
</dbReference>
<dbReference type="STRING" id="882.DVU_2216"/>
<dbReference type="PaxDb" id="882-DVU_2216"/>
<dbReference type="EnsemblBacteria" id="AAS96689">
    <property type="protein sequence ID" value="AAS96689"/>
    <property type="gene ID" value="DVU_2216"/>
</dbReference>
<dbReference type="KEGG" id="dvu:DVU_2216"/>
<dbReference type="PATRIC" id="fig|882.5.peg.2013"/>
<dbReference type="eggNOG" id="COG0361">
    <property type="taxonomic scope" value="Bacteria"/>
</dbReference>
<dbReference type="HOGENOM" id="CLU_151267_1_0_7"/>
<dbReference type="OrthoDB" id="9803250at2"/>
<dbReference type="PhylomeDB" id="P61687"/>
<dbReference type="Proteomes" id="UP000002194">
    <property type="component" value="Chromosome"/>
</dbReference>
<dbReference type="GO" id="GO:0005829">
    <property type="term" value="C:cytosol"/>
    <property type="evidence" value="ECO:0007669"/>
    <property type="project" value="TreeGrafter"/>
</dbReference>
<dbReference type="GO" id="GO:0043022">
    <property type="term" value="F:ribosome binding"/>
    <property type="evidence" value="ECO:0007669"/>
    <property type="project" value="UniProtKB-UniRule"/>
</dbReference>
<dbReference type="GO" id="GO:0019843">
    <property type="term" value="F:rRNA binding"/>
    <property type="evidence" value="ECO:0007669"/>
    <property type="project" value="UniProtKB-UniRule"/>
</dbReference>
<dbReference type="GO" id="GO:0003743">
    <property type="term" value="F:translation initiation factor activity"/>
    <property type="evidence" value="ECO:0007669"/>
    <property type="project" value="UniProtKB-UniRule"/>
</dbReference>
<dbReference type="CDD" id="cd04451">
    <property type="entry name" value="S1_IF1"/>
    <property type="match status" value="1"/>
</dbReference>
<dbReference type="FunFam" id="2.40.50.140:FF:000002">
    <property type="entry name" value="Translation initiation factor IF-1"/>
    <property type="match status" value="1"/>
</dbReference>
<dbReference type="Gene3D" id="2.40.50.140">
    <property type="entry name" value="Nucleic acid-binding proteins"/>
    <property type="match status" value="1"/>
</dbReference>
<dbReference type="HAMAP" id="MF_00075">
    <property type="entry name" value="IF_1"/>
    <property type="match status" value="1"/>
</dbReference>
<dbReference type="InterPro" id="IPR012340">
    <property type="entry name" value="NA-bd_OB-fold"/>
</dbReference>
<dbReference type="InterPro" id="IPR006196">
    <property type="entry name" value="RNA-binding_domain_S1_IF1"/>
</dbReference>
<dbReference type="InterPro" id="IPR004368">
    <property type="entry name" value="TIF_IF1"/>
</dbReference>
<dbReference type="NCBIfam" id="TIGR00008">
    <property type="entry name" value="infA"/>
    <property type="match status" value="1"/>
</dbReference>
<dbReference type="PANTHER" id="PTHR33370">
    <property type="entry name" value="TRANSLATION INITIATION FACTOR IF-1, CHLOROPLASTIC"/>
    <property type="match status" value="1"/>
</dbReference>
<dbReference type="PANTHER" id="PTHR33370:SF1">
    <property type="entry name" value="TRANSLATION INITIATION FACTOR IF-1, CHLOROPLASTIC"/>
    <property type="match status" value="1"/>
</dbReference>
<dbReference type="Pfam" id="PF01176">
    <property type="entry name" value="eIF-1a"/>
    <property type="match status" value="1"/>
</dbReference>
<dbReference type="SUPFAM" id="SSF50249">
    <property type="entry name" value="Nucleic acid-binding proteins"/>
    <property type="match status" value="1"/>
</dbReference>
<dbReference type="PROSITE" id="PS50832">
    <property type="entry name" value="S1_IF1_TYPE"/>
    <property type="match status" value="1"/>
</dbReference>
<organism>
    <name type="scientific">Nitratidesulfovibrio vulgaris (strain ATCC 29579 / DSM 644 / CCUG 34227 / NCIMB 8303 / VKM B-1760 / Hildenborough)</name>
    <name type="common">Desulfovibrio vulgaris</name>
    <dbReference type="NCBI Taxonomy" id="882"/>
    <lineage>
        <taxon>Bacteria</taxon>
        <taxon>Pseudomonadati</taxon>
        <taxon>Thermodesulfobacteriota</taxon>
        <taxon>Desulfovibrionia</taxon>
        <taxon>Desulfovibrionales</taxon>
        <taxon>Desulfovibrionaceae</taxon>
        <taxon>Nitratidesulfovibrio</taxon>
    </lineage>
</organism>
<comment type="function">
    <text evidence="1">One of the essential components for the initiation of protein synthesis. Stabilizes the binding of IF-2 and IF-3 on the 30S subunit to which N-formylmethionyl-tRNA(fMet) subsequently binds. Helps modulate mRNA selection, yielding the 30S pre-initiation complex (PIC). Upon addition of the 50S ribosomal subunit IF-1, IF-2 and IF-3 are released leaving the mature 70S translation initiation complex.</text>
</comment>
<comment type="subunit">
    <text evidence="1">Component of the 30S ribosomal translation pre-initiation complex which assembles on the 30S ribosome in the order IF-2 and IF-3, IF-1 and N-formylmethionyl-tRNA(fMet); mRNA recruitment can occur at any time during PIC assembly.</text>
</comment>
<comment type="subcellular location">
    <subcellularLocation>
        <location evidence="1">Cytoplasm</location>
    </subcellularLocation>
</comment>
<comment type="similarity">
    <text evidence="1">Belongs to the IF-1 family.</text>
</comment>
<name>IF12_NITV2</name>
<protein>
    <recommendedName>
        <fullName evidence="1">Translation initiation factor IF-1 2</fullName>
    </recommendedName>
</protein>